<protein>
    <recommendedName>
        <fullName evidence="1">Large ribosomal subunit protein uL5</fullName>
    </recommendedName>
    <alternativeName>
        <fullName evidence="2">50S ribosomal protein L5</fullName>
    </alternativeName>
</protein>
<keyword id="KW-0687">Ribonucleoprotein</keyword>
<keyword id="KW-0689">Ribosomal protein</keyword>
<keyword id="KW-0694">RNA-binding</keyword>
<keyword id="KW-0699">rRNA-binding</keyword>
<keyword id="KW-0820">tRNA-binding</keyword>
<gene>
    <name evidence="1" type="primary">rplE</name>
    <name type="ordered locus">SPs0054</name>
</gene>
<organism>
    <name type="scientific">Streptococcus pyogenes serotype M3 (strain SSI-1)</name>
    <dbReference type="NCBI Taxonomy" id="193567"/>
    <lineage>
        <taxon>Bacteria</taxon>
        <taxon>Bacillati</taxon>
        <taxon>Bacillota</taxon>
        <taxon>Bacilli</taxon>
        <taxon>Lactobacillales</taxon>
        <taxon>Streptococcaceae</taxon>
        <taxon>Streptococcus</taxon>
    </lineage>
</organism>
<proteinExistence type="inferred from homology"/>
<name>RL5_STRPQ</name>
<reference key="1">
    <citation type="journal article" date="2003" name="Genome Res.">
        <title>Genome sequence of an M3 strain of Streptococcus pyogenes reveals a large-scale genomic rearrangement in invasive strains and new insights into phage evolution.</title>
        <authorList>
            <person name="Nakagawa I."/>
            <person name="Kurokawa K."/>
            <person name="Yamashita A."/>
            <person name="Nakata M."/>
            <person name="Tomiyasu Y."/>
            <person name="Okahashi N."/>
            <person name="Kawabata S."/>
            <person name="Yamazaki K."/>
            <person name="Shiba T."/>
            <person name="Yasunaga T."/>
            <person name="Hayashi H."/>
            <person name="Hattori M."/>
            <person name="Hamada S."/>
        </authorList>
    </citation>
    <scope>NUCLEOTIDE SEQUENCE [LARGE SCALE GENOMIC DNA]</scope>
    <source>
        <strain>SSI-1</strain>
    </source>
</reference>
<dbReference type="EMBL" id="BA000034">
    <property type="protein sequence ID" value="BAC63149.1"/>
    <property type="molecule type" value="Genomic_DNA"/>
</dbReference>
<dbReference type="RefSeq" id="WP_002986634.1">
    <property type="nucleotide sequence ID" value="NC_004606.1"/>
</dbReference>
<dbReference type="SMR" id="P0DE57"/>
<dbReference type="GeneID" id="69900038"/>
<dbReference type="KEGG" id="sps:SPs0054"/>
<dbReference type="HOGENOM" id="CLU_061015_2_1_9"/>
<dbReference type="GO" id="GO:1990904">
    <property type="term" value="C:ribonucleoprotein complex"/>
    <property type="evidence" value="ECO:0007669"/>
    <property type="project" value="UniProtKB-KW"/>
</dbReference>
<dbReference type="GO" id="GO:0005840">
    <property type="term" value="C:ribosome"/>
    <property type="evidence" value="ECO:0007669"/>
    <property type="project" value="UniProtKB-KW"/>
</dbReference>
<dbReference type="GO" id="GO:0019843">
    <property type="term" value="F:rRNA binding"/>
    <property type="evidence" value="ECO:0007669"/>
    <property type="project" value="UniProtKB-UniRule"/>
</dbReference>
<dbReference type="GO" id="GO:0003735">
    <property type="term" value="F:structural constituent of ribosome"/>
    <property type="evidence" value="ECO:0007669"/>
    <property type="project" value="InterPro"/>
</dbReference>
<dbReference type="GO" id="GO:0000049">
    <property type="term" value="F:tRNA binding"/>
    <property type="evidence" value="ECO:0007669"/>
    <property type="project" value="UniProtKB-UniRule"/>
</dbReference>
<dbReference type="GO" id="GO:0006412">
    <property type="term" value="P:translation"/>
    <property type="evidence" value="ECO:0007669"/>
    <property type="project" value="UniProtKB-UniRule"/>
</dbReference>
<dbReference type="FunFam" id="3.30.1440.10:FF:000001">
    <property type="entry name" value="50S ribosomal protein L5"/>
    <property type="match status" value="1"/>
</dbReference>
<dbReference type="Gene3D" id="3.30.1440.10">
    <property type="match status" value="1"/>
</dbReference>
<dbReference type="HAMAP" id="MF_01333_B">
    <property type="entry name" value="Ribosomal_uL5_B"/>
    <property type="match status" value="1"/>
</dbReference>
<dbReference type="InterPro" id="IPR002132">
    <property type="entry name" value="Ribosomal_uL5"/>
</dbReference>
<dbReference type="InterPro" id="IPR020930">
    <property type="entry name" value="Ribosomal_uL5_bac-type"/>
</dbReference>
<dbReference type="InterPro" id="IPR031309">
    <property type="entry name" value="Ribosomal_uL5_C"/>
</dbReference>
<dbReference type="InterPro" id="IPR020929">
    <property type="entry name" value="Ribosomal_uL5_CS"/>
</dbReference>
<dbReference type="InterPro" id="IPR022803">
    <property type="entry name" value="Ribosomal_uL5_dom_sf"/>
</dbReference>
<dbReference type="InterPro" id="IPR031310">
    <property type="entry name" value="Ribosomal_uL5_N"/>
</dbReference>
<dbReference type="NCBIfam" id="NF000585">
    <property type="entry name" value="PRK00010.1"/>
    <property type="match status" value="1"/>
</dbReference>
<dbReference type="PANTHER" id="PTHR11994">
    <property type="entry name" value="60S RIBOSOMAL PROTEIN L11-RELATED"/>
    <property type="match status" value="1"/>
</dbReference>
<dbReference type="Pfam" id="PF00281">
    <property type="entry name" value="Ribosomal_L5"/>
    <property type="match status" value="1"/>
</dbReference>
<dbReference type="Pfam" id="PF00673">
    <property type="entry name" value="Ribosomal_L5_C"/>
    <property type="match status" value="1"/>
</dbReference>
<dbReference type="PIRSF" id="PIRSF002161">
    <property type="entry name" value="Ribosomal_L5"/>
    <property type="match status" value="1"/>
</dbReference>
<dbReference type="SUPFAM" id="SSF55282">
    <property type="entry name" value="RL5-like"/>
    <property type="match status" value="1"/>
</dbReference>
<dbReference type="PROSITE" id="PS00358">
    <property type="entry name" value="RIBOSOMAL_L5"/>
    <property type="match status" value="1"/>
</dbReference>
<comment type="function">
    <text evidence="1">This is one of the proteins that bind and probably mediate the attachment of the 5S RNA into the large ribosomal subunit, where it forms part of the central protuberance. In the 70S ribosome it contacts protein S13 of the 30S subunit (bridge B1b), connecting the 2 subunits; this bridge is implicated in subunit movement. Contacts the P site tRNA; the 5S rRNA and some of its associated proteins might help stabilize positioning of ribosome-bound tRNAs.</text>
</comment>
<comment type="subunit">
    <text evidence="1">Part of the 50S ribosomal subunit; part of the 5S rRNA/L5/L18/L25 subcomplex. Contacts the 5S rRNA and the P site tRNA. Forms a bridge to the 30S subunit in the 70S ribosome.</text>
</comment>
<comment type="similarity">
    <text evidence="1">Belongs to the universal ribosomal protein uL5 family.</text>
</comment>
<feature type="chain" id="PRO_0000411518" description="Large ribosomal subunit protein uL5">
    <location>
        <begin position="1"/>
        <end position="180"/>
    </location>
</feature>
<sequence>MANRLKEKYTNEVIPALTEKFNYTSVMAVPKVEKIVLNMGVGDAVSNAKNLEKAAAELALISGQKPLITKAKKSIAGFRLREGVAIGAKVTLRGERMYEFLDKLVSVSLPRVRDFHGVPTKSFDGRGNYTLGVKEQLIFPEISFDDVDKVRGLDIVIVTTANTDEESRELLKGLGMPFAK</sequence>
<accession>P0DE57</accession>
<accession>Q79YR4</accession>
<accession>Q7CFK8</accession>
<evidence type="ECO:0000255" key="1">
    <source>
        <dbReference type="HAMAP-Rule" id="MF_01333"/>
    </source>
</evidence>
<evidence type="ECO:0000305" key="2"/>